<name>RS19A_DROME</name>
<protein>
    <recommendedName>
        <fullName evidence="2">Small ribosomal subunit protein eS19A</fullName>
    </recommendedName>
    <alternativeName>
        <fullName>40S ribosomal protein S19a</fullName>
    </alternativeName>
</protein>
<feature type="initiator methionine" description="Removed" evidence="1">
    <location>
        <position position="1"/>
    </location>
</feature>
<feature type="chain" id="PRO_0000153824" description="Small ribosomal subunit protein eS19A">
    <location>
        <begin position="2"/>
        <end position="156"/>
    </location>
</feature>
<feature type="sequence conflict" description="In Ref. 1; CAA51677." evidence="2" ref="1">
    <original>V</original>
    <variation>I</variation>
    <location>
        <position position="37"/>
    </location>
</feature>
<comment type="similarity">
    <text evidence="2">Belongs to the eukaryotic ribosomal protein eS19 family.</text>
</comment>
<organism>
    <name type="scientific">Drosophila melanogaster</name>
    <name type="common">Fruit fly</name>
    <dbReference type="NCBI Taxonomy" id="7227"/>
    <lineage>
        <taxon>Eukaryota</taxon>
        <taxon>Metazoa</taxon>
        <taxon>Ecdysozoa</taxon>
        <taxon>Arthropoda</taxon>
        <taxon>Hexapoda</taxon>
        <taxon>Insecta</taxon>
        <taxon>Pterygota</taxon>
        <taxon>Neoptera</taxon>
        <taxon>Endopterygota</taxon>
        <taxon>Diptera</taxon>
        <taxon>Brachycera</taxon>
        <taxon>Muscomorpha</taxon>
        <taxon>Ephydroidea</taxon>
        <taxon>Drosophilidae</taxon>
        <taxon>Drosophila</taxon>
        <taxon>Sophophora</taxon>
    </lineage>
</organism>
<keyword id="KW-0002">3D-structure</keyword>
<keyword id="KW-1185">Reference proteome</keyword>
<keyword id="KW-0687">Ribonucleoprotein</keyword>
<keyword id="KW-0689">Ribosomal protein</keyword>
<reference key="1">
    <citation type="journal article" date="1993" name="Nucleic Acids Res.">
        <title>Drosophila ribosomal protein S19 cDNA sequence.</title>
        <authorList>
            <person name="Baumgartner S.W."/>
            <person name="Martin D."/>
            <person name="Chiquet-Ehrismann R."/>
        </authorList>
    </citation>
    <scope>NUCLEOTIDE SEQUENCE [MRNA]</scope>
    <source>
        <strain>Canton-S</strain>
    </source>
</reference>
<reference key="2">
    <citation type="submission" date="1999-12" db="EMBL/GenBank/DDBJ databases">
        <title>RPS19 gene in Mus musculus and Drosophila melanogaster, and conserved features among 40 different species.</title>
        <authorList>
            <person name="Willig T.-N.D."/>
            <person name="Peters L.L."/>
            <person name="Parra M.K."/>
            <person name="Tchernia G."/>
            <person name="Mohandas N."/>
        </authorList>
    </citation>
    <scope>NUCLEOTIDE SEQUENCE [GENOMIC DNA]</scope>
</reference>
<reference key="3">
    <citation type="journal article" date="2000" name="Science">
        <title>The genome sequence of Drosophila melanogaster.</title>
        <authorList>
            <person name="Adams M.D."/>
            <person name="Celniker S.E."/>
            <person name="Holt R.A."/>
            <person name="Evans C.A."/>
            <person name="Gocayne J.D."/>
            <person name="Amanatides P.G."/>
            <person name="Scherer S.E."/>
            <person name="Li P.W."/>
            <person name="Hoskins R.A."/>
            <person name="Galle R.F."/>
            <person name="George R.A."/>
            <person name="Lewis S.E."/>
            <person name="Richards S."/>
            <person name="Ashburner M."/>
            <person name="Henderson S.N."/>
            <person name="Sutton G.G."/>
            <person name="Wortman J.R."/>
            <person name="Yandell M.D."/>
            <person name="Zhang Q."/>
            <person name="Chen L.X."/>
            <person name="Brandon R.C."/>
            <person name="Rogers Y.-H.C."/>
            <person name="Blazej R.G."/>
            <person name="Champe M."/>
            <person name="Pfeiffer B.D."/>
            <person name="Wan K.H."/>
            <person name="Doyle C."/>
            <person name="Baxter E.G."/>
            <person name="Helt G."/>
            <person name="Nelson C.R."/>
            <person name="Miklos G.L.G."/>
            <person name="Abril J.F."/>
            <person name="Agbayani A."/>
            <person name="An H.-J."/>
            <person name="Andrews-Pfannkoch C."/>
            <person name="Baldwin D."/>
            <person name="Ballew R.M."/>
            <person name="Basu A."/>
            <person name="Baxendale J."/>
            <person name="Bayraktaroglu L."/>
            <person name="Beasley E.M."/>
            <person name="Beeson K.Y."/>
            <person name="Benos P.V."/>
            <person name="Berman B.P."/>
            <person name="Bhandari D."/>
            <person name="Bolshakov S."/>
            <person name="Borkova D."/>
            <person name="Botchan M.R."/>
            <person name="Bouck J."/>
            <person name="Brokstein P."/>
            <person name="Brottier P."/>
            <person name="Burtis K.C."/>
            <person name="Busam D.A."/>
            <person name="Butler H."/>
            <person name="Cadieu E."/>
            <person name="Center A."/>
            <person name="Chandra I."/>
            <person name="Cherry J.M."/>
            <person name="Cawley S."/>
            <person name="Dahlke C."/>
            <person name="Davenport L.B."/>
            <person name="Davies P."/>
            <person name="de Pablos B."/>
            <person name="Delcher A."/>
            <person name="Deng Z."/>
            <person name="Mays A.D."/>
            <person name="Dew I."/>
            <person name="Dietz S.M."/>
            <person name="Dodson K."/>
            <person name="Doup L.E."/>
            <person name="Downes M."/>
            <person name="Dugan-Rocha S."/>
            <person name="Dunkov B.C."/>
            <person name="Dunn P."/>
            <person name="Durbin K.J."/>
            <person name="Evangelista C.C."/>
            <person name="Ferraz C."/>
            <person name="Ferriera S."/>
            <person name="Fleischmann W."/>
            <person name="Fosler C."/>
            <person name="Gabrielian A.E."/>
            <person name="Garg N.S."/>
            <person name="Gelbart W.M."/>
            <person name="Glasser K."/>
            <person name="Glodek A."/>
            <person name="Gong F."/>
            <person name="Gorrell J.H."/>
            <person name="Gu Z."/>
            <person name="Guan P."/>
            <person name="Harris M."/>
            <person name="Harris N.L."/>
            <person name="Harvey D.A."/>
            <person name="Heiman T.J."/>
            <person name="Hernandez J.R."/>
            <person name="Houck J."/>
            <person name="Hostin D."/>
            <person name="Houston K.A."/>
            <person name="Howland T.J."/>
            <person name="Wei M.-H."/>
            <person name="Ibegwam C."/>
            <person name="Jalali M."/>
            <person name="Kalush F."/>
            <person name="Karpen G.H."/>
            <person name="Ke Z."/>
            <person name="Kennison J.A."/>
            <person name="Ketchum K.A."/>
            <person name="Kimmel B.E."/>
            <person name="Kodira C.D."/>
            <person name="Kraft C.L."/>
            <person name="Kravitz S."/>
            <person name="Kulp D."/>
            <person name="Lai Z."/>
            <person name="Lasko P."/>
            <person name="Lei Y."/>
            <person name="Levitsky A.A."/>
            <person name="Li J.H."/>
            <person name="Li Z."/>
            <person name="Liang Y."/>
            <person name="Lin X."/>
            <person name="Liu X."/>
            <person name="Mattei B."/>
            <person name="McIntosh T.C."/>
            <person name="McLeod M.P."/>
            <person name="McPherson D."/>
            <person name="Merkulov G."/>
            <person name="Milshina N.V."/>
            <person name="Mobarry C."/>
            <person name="Morris J."/>
            <person name="Moshrefi A."/>
            <person name="Mount S.M."/>
            <person name="Moy M."/>
            <person name="Murphy B."/>
            <person name="Murphy L."/>
            <person name="Muzny D.M."/>
            <person name="Nelson D.L."/>
            <person name="Nelson D.R."/>
            <person name="Nelson K.A."/>
            <person name="Nixon K."/>
            <person name="Nusskern D.R."/>
            <person name="Pacleb J.M."/>
            <person name="Palazzolo M."/>
            <person name="Pittman G.S."/>
            <person name="Pan S."/>
            <person name="Pollard J."/>
            <person name="Puri V."/>
            <person name="Reese M.G."/>
            <person name="Reinert K."/>
            <person name="Remington K."/>
            <person name="Saunders R.D.C."/>
            <person name="Scheeler F."/>
            <person name="Shen H."/>
            <person name="Shue B.C."/>
            <person name="Siden-Kiamos I."/>
            <person name="Simpson M."/>
            <person name="Skupski M.P."/>
            <person name="Smith T.J."/>
            <person name="Spier E."/>
            <person name="Spradling A.C."/>
            <person name="Stapleton M."/>
            <person name="Strong R."/>
            <person name="Sun E."/>
            <person name="Svirskas R."/>
            <person name="Tector C."/>
            <person name="Turner R."/>
            <person name="Venter E."/>
            <person name="Wang A.H."/>
            <person name="Wang X."/>
            <person name="Wang Z.-Y."/>
            <person name="Wassarman D.A."/>
            <person name="Weinstock G.M."/>
            <person name="Weissenbach J."/>
            <person name="Williams S.M."/>
            <person name="Woodage T."/>
            <person name="Worley K.C."/>
            <person name="Wu D."/>
            <person name="Yang S."/>
            <person name="Yao Q.A."/>
            <person name="Ye J."/>
            <person name="Yeh R.-F."/>
            <person name="Zaveri J.S."/>
            <person name="Zhan M."/>
            <person name="Zhang G."/>
            <person name="Zhao Q."/>
            <person name="Zheng L."/>
            <person name="Zheng X.H."/>
            <person name="Zhong F.N."/>
            <person name="Zhong W."/>
            <person name="Zhou X."/>
            <person name="Zhu S.C."/>
            <person name="Zhu X."/>
            <person name="Smith H.O."/>
            <person name="Gibbs R.A."/>
            <person name="Myers E.W."/>
            <person name="Rubin G.M."/>
            <person name="Venter J.C."/>
        </authorList>
    </citation>
    <scope>NUCLEOTIDE SEQUENCE [LARGE SCALE GENOMIC DNA]</scope>
    <source>
        <strain>Berkeley</strain>
    </source>
</reference>
<reference key="4">
    <citation type="journal article" date="2002" name="Genome Biol.">
        <title>Annotation of the Drosophila melanogaster euchromatic genome: a systematic review.</title>
        <authorList>
            <person name="Misra S."/>
            <person name="Crosby M.A."/>
            <person name="Mungall C.J."/>
            <person name="Matthews B.B."/>
            <person name="Campbell K.S."/>
            <person name="Hradecky P."/>
            <person name="Huang Y."/>
            <person name="Kaminker J.S."/>
            <person name="Millburn G.H."/>
            <person name="Prochnik S.E."/>
            <person name="Smith C.D."/>
            <person name="Tupy J.L."/>
            <person name="Whitfield E.J."/>
            <person name="Bayraktaroglu L."/>
            <person name="Berman B.P."/>
            <person name="Bettencourt B.R."/>
            <person name="Celniker S.E."/>
            <person name="de Grey A.D.N.J."/>
            <person name="Drysdale R.A."/>
            <person name="Harris N.L."/>
            <person name="Richter J."/>
            <person name="Russo S."/>
            <person name="Schroeder A.J."/>
            <person name="Shu S.Q."/>
            <person name="Stapleton M."/>
            <person name="Yamada C."/>
            <person name="Ashburner M."/>
            <person name="Gelbart W.M."/>
            <person name="Rubin G.M."/>
            <person name="Lewis S.E."/>
        </authorList>
    </citation>
    <scope>GENOME REANNOTATION</scope>
    <source>
        <strain>Berkeley</strain>
    </source>
</reference>
<reference key="5">
    <citation type="journal article" date="2002" name="Genome Biol.">
        <title>A Drosophila full-length cDNA resource.</title>
        <authorList>
            <person name="Stapleton M."/>
            <person name="Carlson J.W."/>
            <person name="Brokstein P."/>
            <person name="Yu C."/>
            <person name="Champe M."/>
            <person name="George R.A."/>
            <person name="Guarin H."/>
            <person name="Kronmiller B."/>
            <person name="Pacleb J.M."/>
            <person name="Park S."/>
            <person name="Wan K.H."/>
            <person name="Rubin G.M."/>
            <person name="Celniker S.E."/>
        </authorList>
    </citation>
    <scope>NUCLEOTIDE SEQUENCE [LARGE SCALE MRNA]</scope>
    <source>
        <strain>Berkeley</strain>
        <tissue>Ovary</tissue>
    </source>
</reference>
<reference key="6">
    <citation type="journal article" date="2013" name="Nature">
        <title>Structures of the human and Drosophila 80S ribosome.</title>
        <authorList>
            <person name="Anger A.M."/>
            <person name="Armache J.P."/>
            <person name="Berninghausen O."/>
            <person name="Habeck M."/>
            <person name="Subklewe M."/>
            <person name="Wilson D.N."/>
            <person name="Beckmann R."/>
        </authorList>
    </citation>
    <scope>STRUCTURE BY ELECTRON MICROSCOPY (6.0 ANGSTROMS) OF THE 80S RIBOSOME</scope>
</reference>
<dbReference type="EMBL" id="X73153">
    <property type="protein sequence ID" value="CAA51677.1"/>
    <property type="molecule type" value="mRNA"/>
</dbReference>
<dbReference type="EMBL" id="AF216206">
    <property type="protein sequence ID" value="AAF65682.1"/>
    <property type="molecule type" value="Genomic_DNA"/>
</dbReference>
<dbReference type="EMBL" id="AE014298">
    <property type="protein sequence ID" value="AAN09412.1"/>
    <property type="molecule type" value="Genomic_DNA"/>
</dbReference>
<dbReference type="EMBL" id="AY118868">
    <property type="protein sequence ID" value="AAM50728.1"/>
    <property type="molecule type" value="mRNA"/>
</dbReference>
<dbReference type="RefSeq" id="NP_001285338.1">
    <property type="nucleotide sequence ID" value="NM_001298409.1"/>
</dbReference>
<dbReference type="RefSeq" id="NP_001285339.1">
    <property type="nucleotide sequence ID" value="NM_001298410.1"/>
</dbReference>
<dbReference type="RefSeq" id="NP_523376.1">
    <property type="nucleotide sequence ID" value="NM_078652.4"/>
</dbReference>
<dbReference type="RefSeq" id="NP_727992.1">
    <property type="nucleotide sequence ID" value="NM_167526.3"/>
</dbReference>
<dbReference type="RefSeq" id="NP_727993.1">
    <property type="nucleotide sequence ID" value="NM_167527.3"/>
</dbReference>
<dbReference type="PDB" id="4V6W">
    <property type="method" value="EM"/>
    <property type="resolution" value="6.00 A"/>
    <property type="chains" value="AT=1-156"/>
</dbReference>
<dbReference type="PDB" id="6XU6">
    <property type="method" value="EM"/>
    <property type="resolution" value="3.50 A"/>
    <property type="chains" value="AT=6-148"/>
</dbReference>
<dbReference type="PDB" id="6XU7">
    <property type="method" value="EM"/>
    <property type="resolution" value="4.90 A"/>
    <property type="chains" value="AT=6-148"/>
</dbReference>
<dbReference type="PDB" id="6XU8">
    <property type="method" value="EM"/>
    <property type="resolution" value="3.00 A"/>
    <property type="chains" value="AT=6-144"/>
</dbReference>
<dbReference type="PDBsum" id="4V6W"/>
<dbReference type="PDBsum" id="6XU6"/>
<dbReference type="PDBsum" id="6XU7"/>
<dbReference type="PDBsum" id="6XU8"/>
<dbReference type="EMDB" id="EMD-10622"/>
<dbReference type="EMDB" id="EMD-10623"/>
<dbReference type="EMDB" id="EMD-10624"/>
<dbReference type="SMR" id="P39018"/>
<dbReference type="BioGRID" id="58971">
    <property type="interactions" value="94"/>
</dbReference>
<dbReference type="FunCoup" id="P39018">
    <property type="interactions" value="1444"/>
</dbReference>
<dbReference type="IntAct" id="P39018">
    <property type="interactions" value="27"/>
</dbReference>
<dbReference type="MINT" id="P39018"/>
<dbReference type="STRING" id="7227.FBpp0309135"/>
<dbReference type="PaxDb" id="7227-FBpp0074086"/>
<dbReference type="DNASU" id="32635"/>
<dbReference type="EnsemblMetazoa" id="FBtr0074311">
    <property type="protein sequence ID" value="FBpp0074086"/>
    <property type="gene ID" value="FBgn0010412"/>
</dbReference>
<dbReference type="EnsemblMetazoa" id="FBtr0074312">
    <property type="protein sequence ID" value="FBpp0074087"/>
    <property type="gene ID" value="FBgn0010412"/>
</dbReference>
<dbReference type="EnsemblMetazoa" id="FBtr0074313">
    <property type="protein sequence ID" value="FBpp0074088"/>
    <property type="gene ID" value="FBgn0010412"/>
</dbReference>
<dbReference type="EnsemblMetazoa" id="FBtr0340149">
    <property type="protein sequence ID" value="FBpp0309135"/>
    <property type="gene ID" value="FBgn0010412"/>
</dbReference>
<dbReference type="EnsemblMetazoa" id="FBtr0345129">
    <property type="protein sequence ID" value="FBpp0311350"/>
    <property type="gene ID" value="FBgn0010412"/>
</dbReference>
<dbReference type="GeneID" id="32635"/>
<dbReference type="KEGG" id="dme:Dmel_CG4464"/>
<dbReference type="AGR" id="FB:FBgn0010412"/>
<dbReference type="CTD" id="32635"/>
<dbReference type="FlyBase" id="FBgn0010412">
    <property type="gene designation" value="RpS19a"/>
</dbReference>
<dbReference type="VEuPathDB" id="VectorBase:FBgn0010412"/>
<dbReference type="eggNOG" id="KOG3411">
    <property type="taxonomic scope" value="Eukaryota"/>
</dbReference>
<dbReference type="GeneTree" id="ENSGT00940000164207"/>
<dbReference type="HOGENOM" id="CLU_108559_0_1_1"/>
<dbReference type="InParanoid" id="P39018"/>
<dbReference type="OMA" id="WAPFVKT"/>
<dbReference type="OrthoDB" id="428974at2759"/>
<dbReference type="PhylomeDB" id="P39018"/>
<dbReference type="Reactome" id="R-DME-156827">
    <property type="pathway name" value="L13a-mediated translational silencing of Ceruloplasmin expression"/>
</dbReference>
<dbReference type="Reactome" id="R-DME-1799339">
    <property type="pathway name" value="SRP-dependent cotranslational protein targeting to membrane"/>
</dbReference>
<dbReference type="Reactome" id="R-DME-72649">
    <property type="pathway name" value="Translation initiation complex formation"/>
</dbReference>
<dbReference type="Reactome" id="R-DME-72689">
    <property type="pathway name" value="Formation of a pool of free 40S subunits"/>
</dbReference>
<dbReference type="Reactome" id="R-DME-72695">
    <property type="pathway name" value="Formation of the ternary complex, and subsequently, the 43S complex"/>
</dbReference>
<dbReference type="Reactome" id="R-DME-72702">
    <property type="pathway name" value="Ribosomal scanning and start codon recognition"/>
</dbReference>
<dbReference type="Reactome" id="R-DME-72706">
    <property type="pathway name" value="GTP hydrolysis and joining of the 60S ribosomal subunit"/>
</dbReference>
<dbReference type="Reactome" id="R-DME-975956">
    <property type="pathway name" value="Nonsense Mediated Decay (NMD) independent of the Exon Junction Complex (EJC)"/>
</dbReference>
<dbReference type="Reactome" id="R-DME-975957">
    <property type="pathway name" value="Nonsense Mediated Decay (NMD) enhanced by the Exon Junction Complex (EJC)"/>
</dbReference>
<dbReference type="SignaLink" id="P39018"/>
<dbReference type="BioGRID-ORCS" id="32635">
    <property type="hits" value="1 hit in 1 CRISPR screen"/>
</dbReference>
<dbReference type="GenomeRNAi" id="32635"/>
<dbReference type="PRO" id="PR:P39018"/>
<dbReference type="Proteomes" id="UP000000803">
    <property type="component" value="Chromosome X"/>
</dbReference>
<dbReference type="Bgee" id="FBgn0010412">
    <property type="expression patterns" value="Expressed in wing disc and 286 other cell types or tissues"/>
</dbReference>
<dbReference type="ExpressionAtlas" id="P39018">
    <property type="expression patterns" value="baseline and differential"/>
</dbReference>
<dbReference type="GO" id="GO:0022626">
    <property type="term" value="C:cytosolic ribosome"/>
    <property type="evidence" value="ECO:0000314"/>
    <property type="project" value="FlyBase"/>
</dbReference>
<dbReference type="GO" id="GO:0022627">
    <property type="term" value="C:cytosolic small ribosomal subunit"/>
    <property type="evidence" value="ECO:0000318"/>
    <property type="project" value="GO_Central"/>
</dbReference>
<dbReference type="GO" id="GO:0003723">
    <property type="term" value="F:RNA binding"/>
    <property type="evidence" value="ECO:0000318"/>
    <property type="project" value="GO_Central"/>
</dbReference>
<dbReference type="GO" id="GO:0003735">
    <property type="term" value="F:structural constituent of ribosome"/>
    <property type="evidence" value="ECO:0000314"/>
    <property type="project" value="FlyBase"/>
</dbReference>
<dbReference type="GO" id="GO:0002181">
    <property type="term" value="P:cytoplasmic translation"/>
    <property type="evidence" value="ECO:0000304"/>
    <property type="project" value="FlyBase"/>
</dbReference>
<dbReference type="GO" id="GO:0000028">
    <property type="term" value="P:ribosomal small subunit assembly"/>
    <property type="evidence" value="ECO:0000318"/>
    <property type="project" value="GO_Central"/>
</dbReference>
<dbReference type="FunFam" id="1.10.10.10:FF:000118">
    <property type="entry name" value="40S ribosomal protein S19"/>
    <property type="match status" value="1"/>
</dbReference>
<dbReference type="Gene3D" id="1.10.10.10">
    <property type="entry name" value="Winged helix-like DNA-binding domain superfamily/Winged helix DNA-binding domain"/>
    <property type="match status" value="1"/>
</dbReference>
<dbReference type="InterPro" id="IPR001266">
    <property type="entry name" value="Ribosomal_eS19"/>
</dbReference>
<dbReference type="InterPro" id="IPR018277">
    <property type="entry name" value="Ribosomal_eS19_CS"/>
</dbReference>
<dbReference type="InterPro" id="IPR036388">
    <property type="entry name" value="WH-like_DNA-bd_sf"/>
</dbReference>
<dbReference type="InterPro" id="IPR036390">
    <property type="entry name" value="WH_DNA-bd_sf"/>
</dbReference>
<dbReference type="PANTHER" id="PTHR11710">
    <property type="entry name" value="40S RIBOSOMAL PROTEIN S19"/>
    <property type="match status" value="1"/>
</dbReference>
<dbReference type="PANTHER" id="PTHR11710:SF0">
    <property type="entry name" value="40S RIBOSOMAL PROTEIN S19"/>
    <property type="match status" value="1"/>
</dbReference>
<dbReference type="Pfam" id="PF01090">
    <property type="entry name" value="Ribosomal_S19e"/>
    <property type="match status" value="1"/>
</dbReference>
<dbReference type="SMART" id="SM01413">
    <property type="entry name" value="Ribosomal_S19e"/>
    <property type="match status" value="1"/>
</dbReference>
<dbReference type="SUPFAM" id="SSF46785">
    <property type="entry name" value="Winged helix' DNA-binding domain"/>
    <property type="match status" value="1"/>
</dbReference>
<dbReference type="PROSITE" id="PS00628">
    <property type="entry name" value="RIBOSOMAL_S19E"/>
    <property type="match status" value="1"/>
</dbReference>
<proteinExistence type="evidence at protein level"/>
<gene>
    <name type="primary">RpS19a</name>
    <name type="synonym">RpS19</name>
    <name type="ORF">CG4464</name>
</gene>
<evidence type="ECO:0000250" key="1"/>
<evidence type="ECO:0000305" key="2"/>
<sequence length="156" mass="17291">MPGVTVKDIDQHAVTKAVAVFLKKTGKLKVPDQMDIVKTAKFKELAPYDPDWFYVRCASILRHLYHRSPAGVGSITKIYGGRKRNGVHPSHFCRAADGAARKALQALEHARLVEKHPDGGRKLSSIGQRDLDRIANQIVFKQRDAAKQTGPIVISK</sequence>
<accession>P39018</accession>
<accession>A4V4N1</accession>
<accession>B7Z0Y8</accession>
<accession>Q9VXE1</accession>